<name>KPYK_STAAN</name>
<evidence type="ECO:0000250" key="1"/>
<evidence type="ECO:0000250" key="2">
    <source>
        <dbReference type="UniProtKB" id="P14618"/>
    </source>
</evidence>
<evidence type="ECO:0000305" key="3"/>
<gene>
    <name type="primary">pyk</name>
    <name type="ordered locus">SA1520</name>
</gene>
<accession>Q7A559</accession>
<dbReference type="EC" id="2.7.1.40"/>
<dbReference type="EMBL" id="BA000018">
    <property type="protein sequence ID" value="BAB42787.1"/>
    <property type="molecule type" value="Genomic_DNA"/>
</dbReference>
<dbReference type="PIR" id="F89953">
    <property type="entry name" value="F89953"/>
</dbReference>
<dbReference type="RefSeq" id="WP_001232648.1">
    <property type="nucleotide sequence ID" value="NC_002745.2"/>
</dbReference>
<dbReference type="SMR" id="Q7A559"/>
<dbReference type="EnsemblBacteria" id="BAB42787">
    <property type="protein sequence ID" value="BAB42787"/>
    <property type="gene ID" value="BAB42787"/>
</dbReference>
<dbReference type="KEGG" id="sau:SA1520"/>
<dbReference type="HOGENOM" id="CLU_015439_0_2_9"/>
<dbReference type="UniPathway" id="UPA00109">
    <property type="reaction ID" value="UER00188"/>
</dbReference>
<dbReference type="GO" id="GO:0005524">
    <property type="term" value="F:ATP binding"/>
    <property type="evidence" value="ECO:0007669"/>
    <property type="project" value="UniProtKB-KW"/>
</dbReference>
<dbReference type="GO" id="GO:0016301">
    <property type="term" value="F:kinase activity"/>
    <property type="evidence" value="ECO:0007669"/>
    <property type="project" value="UniProtKB-KW"/>
</dbReference>
<dbReference type="GO" id="GO:0000287">
    <property type="term" value="F:magnesium ion binding"/>
    <property type="evidence" value="ECO:0007669"/>
    <property type="project" value="InterPro"/>
</dbReference>
<dbReference type="GO" id="GO:0030955">
    <property type="term" value="F:potassium ion binding"/>
    <property type="evidence" value="ECO:0007669"/>
    <property type="project" value="InterPro"/>
</dbReference>
<dbReference type="GO" id="GO:0004743">
    <property type="term" value="F:pyruvate kinase activity"/>
    <property type="evidence" value="ECO:0007669"/>
    <property type="project" value="UniProtKB-EC"/>
</dbReference>
<dbReference type="FunFam" id="2.40.33.10:FF:000001">
    <property type="entry name" value="Pyruvate kinase"/>
    <property type="match status" value="1"/>
</dbReference>
<dbReference type="FunFam" id="3.20.20.60:FF:000001">
    <property type="entry name" value="Pyruvate kinase"/>
    <property type="match status" value="1"/>
</dbReference>
<dbReference type="FunFam" id="3.40.1380.20:FF:000017">
    <property type="entry name" value="Pyruvate kinase"/>
    <property type="match status" value="1"/>
</dbReference>
<dbReference type="Gene3D" id="3.20.20.60">
    <property type="entry name" value="Phosphoenolpyruvate-binding domains"/>
    <property type="match status" value="1"/>
</dbReference>
<dbReference type="Gene3D" id="3.50.30.10">
    <property type="entry name" value="Phosphohistidine domain"/>
    <property type="match status" value="1"/>
</dbReference>
<dbReference type="Gene3D" id="2.40.33.10">
    <property type="entry name" value="PK beta-barrel domain-like"/>
    <property type="match status" value="1"/>
</dbReference>
<dbReference type="Gene3D" id="3.40.1380.20">
    <property type="entry name" value="Pyruvate kinase, C-terminal domain"/>
    <property type="match status" value="1"/>
</dbReference>
<dbReference type="InterPro" id="IPR008279">
    <property type="entry name" value="PEP-util_enz_mobile_dom"/>
</dbReference>
<dbReference type="InterPro" id="IPR036637">
    <property type="entry name" value="Phosphohistidine_dom_sf"/>
</dbReference>
<dbReference type="InterPro" id="IPR001697">
    <property type="entry name" value="Pyr_Knase"/>
</dbReference>
<dbReference type="InterPro" id="IPR015813">
    <property type="entry name" value="Pyrv/PenolPyrv_kinase-like_dom"/>
</dbReference>
<dbReference type="InterPro" id="IPR040442">
    <property type="entry name" value="Pyrv_kinase-like_dom_sf"/>
</dbReference>
<dbReference type="InterPro" id="IPR011037">
    <property type="entry name" value="Pyrv_Knase-like_insert_dom_sf"/>
</dbReference>
<dbReference type="InterPro" id="IPR015793">
    <property type="entry name" value="Pyrv_Knase_brl"/>
</dbReference>
<dbReference type="InterPro" id="IPR015795">
    <property type="entry name" value="Pyrv_Knase_C"/>
</dbReference>
<dbReference type="InterPro" id="IPR036918">
    <property type="entry name" value="Pyrv_Knase_C_sf"/>
</dbReference>
<dbReference type="InterPro" id="IPR015806">
    <property type="entry name" value="Pyrv_Knase_insert_dom_sf"/>
</dbReference>
<dbReference type="NCBIfam" id="NF004491">
    <property type="entry name" value="PRK05826.1"/>
    <property type="match status" value="1"/>
</dbReference>
<dbReference type="NCBIfam" id="NF004978">
    <property type="entry name" value="PRK06354.1"/>
    <property type="match status" value="1"/>
</dbReference>
<dbReference type="NCBIfam" id="TIGR01064">
    <property type="entry name" value="pyruv_kin"/>
    <property type="match status" value="1"/>
</dbReference>
<dbReference type="PANTHER" id="PTHR11817">
    <property type="entry name" value="PYRUVATE KINASE"/>
    <property type="match status" value="1"/>
</dbReference>
<dbReference type="Pfam" id="PF00391">
    <property type="entry name" value="PEP-utilizers"/>
    <property type="match status" value="1"/>
</dbReference>
<dbReference type="Pfam" id="PF00224">
    <property type="entry name" value="PK"/>
    <property type="match status" value="1"/>
</dbReference>
<dbReference type="Pfam" id="PF02887">
    <property type="entry name" value="PK_C"/>
    <property type="match status" value="1"/>
</dbReference>
<dbReference type="PRINTS" id="PR01050">
    <property type="entry name" value="PYRUVTKNASE"/>
</dbReference>
<dbReference type="SUPFAM" id="SSF51621">
    <property type="entry name" value="Phosphoenolpyruvate/pyruvate domain"/>
    <property type="match status" value="1"/>
</dbReference>
<dbReference type="SUPFAM" id="SSF52009">
    <property type="entry name" value="Phosphohistidine domain"/>
    <property type="match status" value="1"/>
</dbReference>
<dbReference type="SUPFAM" id="SSF50800">
    <property type="entry name" value="PK beta-barrel domain-like"/>
    <property type="match status" value="1"/>
</dbReference>
<dbReference type="SUPFAM" id="SSF52935">
    <property type="entry name" value="PK C-terminal domain-like"/>
    <property type="match status" value="1"/>
</dbReference>
<feature type="chain" id="PRO_0000294134" description="Pyruvate kinase">
    <location>
        <begin position="1"/>
        <end position="585"/>
    </location>
</feature>
<feature type="binding site" evidence="1">
    <location>
        <position position="32"/>
    </location>
    <ligand>
        <name>substrate</name>
    </ligand>
</feature>
<feature type="binding site" evidence="2">
    <location>
        <begin position="34"/>
        <end position="37"/>
    </location>
    <ligand>
        <name>ATP</name>
        <dbReference type="ChEBI" id="CHEBI:30616"/>
    </ligand>
</feature>
<feature type="binding site" evidence="1">
    <location>
        <position position="34"/>
    </location>
    <ligand>
        <name>K(+)</name>
        <dbReference type="ChEBI" id="CHEBI:29103"/>
    </ligand>
</feature>
<feature type="binding site" evidence="1">
    <location>
        <position position="36"/>
    </location>
    <ligand>
        <name>K(+)</name>
        <dbReference type="ChEBI" id="CHEBI:29103"/>
    </ligand>
</feature>
<feature type="binding site" evidence="1">
    <location>
        <position position="66"/>
    </location>
    <ligand>
        <name>K(+)</name>
        <dbReference type="ChEBI" id="CHEBI:29103"/>
    </ligand>
</feature>
<feature type="binding site" evidence="1">
    <location>
        <position position="67"/>
    </location>
    <ligand>
        <name>K(+)</name>
        <dbReference type="ChEBI" id="CHEBI:29103"/>
    </ligand>
</feature>
<feature type="binding site" evidence="2">
    <location>
        <position position="73"/>
    </location>
    <ligand>
        <name>ATP</name>
        <dbReference type="ChEBI" id="CHEBI:30616"/>
    </ligand>
</feature>
<feature type="binding site" evidence="2">
    <location>
        <position position="156"/>
    </location>
    <ligand>
        <name>ATP</name>
        <dbReference type="ChEBI" id="CHEBI:30616"/>
    </ligand>
</feature>
<feature type="binding site" evidence="1">
    <location>
        <position position="221"/>
    </location>
    <ligand>
        <name>Mg(2+)</name>
        <dbReference type="ChEBI" id="CHEBI:18420"/>
    </ligand>
</feature>
<feature type="binding site" evidence="1">
    <location>
        <position position="244"/>
    </location>
    <ligand>
        <name>substrate</name>
    </ligand>
</feature>
<feature type="binding site" evidence="1">
    <location>
        <position position="245"/>
    </location>
    <ligand>
        <name>Mg(2+)</name>
        <dbReference type="ChEBI" id="CHEBI:18420"/>
    </ligand>
</feature>
<feature type="binding site" evidence="1">
    <location>
        <position position="245"/>
    </location>
    <ligand>
        <name>substrate</name>
    </ligand>
</feature>
<feature type="binding site" evidence="1">
    <location>
        <position position="277"/>
    </location>
    <ligand>
        <name>substrate</name>
    </ligand>
</feature>
<feature type="site" description="Transition state stabilizer" evidence="1">
    <location>
        <position position="219"/>
    </location>
</feature>
<proteinExistence type="evidence at protein level"/>
<protein>
    <recommendedName>
        <fullName>Pyruvate kinase</fullName>
        <shortName>PK</shortName>
        <ecNumber>2.7.1.40</ecNumber>
    </recommendedName>
</protein>
<keyword id="KW-0067">ATP-binding</keyword>
<keyword id="KW-0324">Glycolysis</keyword>
<keyword id="KW-0418">Kinase</keyword>
<keyword id="KW-0460">Magnesium</keyword>
<keyword id="KW-0479">Metal-binding</keyword>
<keyword id="KW-0547">Nucleotide-binding</keyword>
<keyword id="KW-0630">Potassium</keyword>
<keyword id="KW-0670">Pyruvate</keyword>
<keyword id="KW-0808">Transferase</keyword>
<sequence>MRKTKIVCTIGPASESEEMIEKLINAGMNVARLNFSHGSHEEHKGRIDTIRKVAKRLDKIVAILLDTKGPEIRTHNMKDGIIELERGNEVIVSMNEVEGTPEKFSVTYENLINDVQVGSYILLDDGLIELQVKDIDHAKKEVKCDILNSGELKNKKGVNLPGVRVSLPGITEKDAEDIRFGIKENVDFIAASFVRRPSDVLEIREILEEQKANISVFPKIENQEGIDNIAEILEVSDGLMVARGDMGVEIPPEKVPMVQKDLIRQCNKLGKPVITATQMLDSMQRNPRATRAEASDVANAIYDGTDAVMLSGETAAGLYPEEAVKTMRNIAVSAEAAQDYKKLLSDRTKLVETSLVNAIGISVAHTALNLNVKAIVAATESGSTARTISKYRPHSDIIAVTPSEETARQCSIVWGVQPVVKKGRKSTDALLNNAVATAVETGRVSNGDLIIITAGVPTGETGTTNMMKIHLVGDEIANGQGIGRGSVVGTTLVAETVKDLEGKDLSDKVIVTNSIDETFVPYVEKALGLITEENGITSPSAIVGLEKGIPTVVGVEKAVKNISNNMLVTIDAAQGKIFEGYANVL</sequence>
<reference key="1">
    <citation type="journal article" date="2001" name="Lancet">
        <title>Whole genome sequencing of meticillin-resistant Staphylococcus aureus.</title>
        <authorList>
            <person name="Kuroda M."/>
            <person name="Ohta T."/>
            <person name="Uchiyama I."/>
            <person name="Baba T."/>
            <person name="Yuzawa H."/>
            <person name="Kobayashi I."/>
            <person name="Cui L."/>
            <person name="Oguchi A."/>
            <person name="Aoki K."/>
            <person name="Nagai Y."/>
            <person name="Lian J.-Q."/>
            <person name="Ito T."/>
            <person name="Kanamori M."/>
            <person name="Matsumaru H."/>
            <person name="Maruyama A."/>
            <person name="Murakami H."/>
            <person name="Hosoyama A."/>
            <person name="Mizutani-Ui Y."/>
            <person name="Takahashi N.K."/>
            <person name="Sawano T."/>
            <person name="Inoue R."/>
            <person name="Kaito C."/>
            <person name="Sekimizu K."/>
            <person name="Hirakawa H."/>
            <person name="Kuhara S."/>
            <person name="Goto S."/>
            <person name="Yabuzaki J."/>
            <person name="Kanehisa M."/>
            <person name="Yamashita A."/>
            <person name="Oshima K."/>
            <person name="Furuya K."/>
            <person name="Yoshino C."/>
            <person name="Shiba T."/>
            <person name="Hattori M."/>
            <person name="Ogasawara N."/>
            <person name="Hayashi H."/>
            <person name="Hiramatsu K."/>
        </authorList>
    </citation>
    <scope>NUCLEOTIDE SEQUENCE [LARGE SCALE GENOMIC DNA]</scope>
    <source>
        <strain>N315</strain>
    </source>
</reference>
<reference key="2">
    <citation type="submission" date="2005-11" db="UniProtKB">
        <title>Shotgun proteomic analysis of total protein extract of S. aureus S30 versus N315.</title>
        <authorList>
            <person name="Stenz L."/>
        </authorList>
    </citation>
    <scope>IDENTIFICATION BY MASS SPECTROMETRY</scope>
</reference>
<reference key="3">
    <citation type="submission" date="2007-10" db="UniProtKB">
        <title>Shotgun proteomic analysis of total and membrane protein extracts of S. aureus strain N315.</title>
        <authorList>
            <person name="Vaezzadeh A.R."/>
            <person name="Deshusses J."/>
            <person name="Lescuyer P."/>
            <person name="Hochstrasser D.F."/>
        </authorList>
    </citation>
    <scope>IDENTIFICATION BY MASS SPECTROMETRY [LARGE SCALE ANALYSIS]</scope>
    <source>
        <strain>N315</strain>
    </source>
</reference>
<comment type="catalytic activity">
    <reaction>
        <text>pyruvate + ATP = phosphoenolpyruvate + ADP + H(+)</text>
        <dbReference type="Rhea" id="RHEA:18157"/>
        <dbReference type="ChEBI" id="CHEBI:15361"/>
        <dbReference type="ChEBI" id="CHEBI:15378"/>
        <dbReference type="ChEBI" id="CHEBI:30616"/>
        <dbReference type="ChEBI" id="CHEBI:58702"/>
        <dbReference type="ChEBI" id="CHEBI:456216"/>
        <dbReference type="EC" id="2.7.1.40"/>
    </reaction>
</comment>
<comment type="cofactor">
    <cofactor evidence="1">
        <name>Mg(2+)</name>
        <dbReference type="ChEBI" id="CHEBI:18420"/>
    </cofactor>
</comment>
<comment type="cofactor">
    <cofactor evidence="1">
        <name>K(+)</name>
        <dbReference type="ChEBI" id="CHEBI:29103"/>
    </cofactor>
</comment>
<comment type="pathway">
    <text>Carbohydrate degradation; glycolysis; pyruvate from D-glyceraldehyde 3-phosphate: step 5/5.</text>
</comment>
<comment type="similarity">
    <text evidence="3">Belongs to the pyruvate kinase family.</text>
</comment>
<comment type="similarity">
    <text evidence="3">In the C-terminal section; belongs to the PEP-utilizing enzyme family.</text>
</comment>
<organism>
    <name type="scientific">Staphylococcus aureus (strain N315)</name>
    <dbReference type="NCBI Taxonomy" id="158879"/>
    <lineage>
        <taxon>Bacteria</taxon>
        <taxon>Bacillati</taxon>
        <taxon>Bacillota</taxon>
        <taxon>Bacilli</taxon>
        <taxon>Bacillales</taxon>
        <taxon>Staphylococcaceae</taxon>
        <taxon>Staphylococcus</taxon>
    </lineage>
</organism>